<accession>P0CC43</accession>
<accession>A8SEE8</accession>
<geneLocation type="chloroplast"/>
<reference key="1">
    <citation type="journal article" date="2007" name="Proc. Natl. Acad. Sci. U.S.A.">
        <title>Using plastid genome-scale data to resolve enigmatic relationships among basal angiosperms.</title>
        <authorList>
            <person name="Moore M.J."/>
            <person name="Bell C.D."/>
            <person name="Soltis P.S."/>
            <person name="Soltis D.E."/>
        </authorList>
    </citation>
    <scope>NUCLEOTIDE SEQUENCE [LARGE SCALE GENOMIC DNA]</scope>
</reference>
<comment type="function">
    <text evidence="1">NDH shuttles electrons from NAD(P)H:plastoquinone, via FMN and iron-sulfur (Fe-S) centers, to quinones in the photosynthetic chain and possibly in a chloroplast respiratory chain. The immediate electron acceptor for the enzyme in this species is believed to be plastoquinone. Couples the redox reaction to proton translocation, and thus conserves the redox energy in a proton gradient.</text>
</comment>
<comment type="catalytic activity">
    <reaction evidence="1">
        <text>a plastoquinone + NADH + (n+1) H(+)(in) = a plastoquinol + NAD(+) + n H(+)(out)</text>
        <dbReference type="Rhea" id="RHEA:42608"/>
        <dbReference type="Rhea" id="RHEA-COMP:9561"/>
        <dbReference type="Rhea" id="RHEA-COMP:9562"/>
        <dbReference type="ChEBI" id="CHEBI:15378"/>
        <dbReference type="ChEBI" id="CHEBI:17757"/>
        <dbReference type="ChEBI" id="CHEBI:57540"/>
        <dbReference type="ChEBI" id="CHEBI:57945"/>
        <dbReference type="ChEBI" id="CHEBI:62192"/>
    </reaction>
</comment>
<comment type="catalytic activity">
    <reaction evidence="1">
        <text>a plastoquinone + NADPH + (n+1) H(+)(in) = a plastoquinol + NADP(+) + n H(+)(out)</text>
        <dbReference type="Rhea" id="RHEA:42612"/>
        <dbReference type="Rhea" id="RHEA-COMP:9561"/>
        <dbReference type="Rhea" id="RHEA-COMP:9562"/>
        <dbReference type="ChEBI" id="CHEBI:15378"/>
        <dbReference type="ChEBI" id="CHEBI:17757"/>
        <dbReference type="ChEBI" id="CHEBI:57783"/>
        <dbReference type="ChEBI" id="CHEBI:58349"/>
        <dbReference type="ChEBI" id="CHEBI:62192"/>
    </reaction>
</comment>
<comment type="subunit">
    <text evidence="1">NDH is composed of at least 16 different subunits, 5 of which are encoded in the nucleus.</text>
</comment>
<comment type="subcellular location">
    <subcellularLocation>
        <location evidence="1">Plastid</location>
        <location evidence="1">Chloroplast thylakoid membrane</location>
        <topology evidence="1">Multi-pass membrane protein</topology>
    </subcellularLocation>
</comment>
<comment type="similarity">
    <text evidence="1">Belongs to the complex I subunit 2 family.</text>
</comment>
<organism>
    <name type="scientific">Ceratophyllum demersum</name>
    <name type="common">Rigid hornwort</name>
    <name type="synonym">Coontail</name>
    <dbReference type="NCBI Taxonomy" id="4428"/>
    <lineage>
        <taxon>Eukaryota</taxon>
        <taxon>Viridiplantae</taxon>
        <taxon>Streptophyta</taxon>
        <taxon>Embryophyta</taxon>
        <taxon>Tracheophyta</taxon>
        <taxon>Spermatophyta</taxon>
        <taxon>Magnoliopsida</taxon>
        <taxon>Ceratophyllales</taxon>
        <taxon>Ceratophyllaceae</taxon>
        <taxon>Ceratophyllum</taxon>
    </lineage>
</organism>
<feature type="chain" id="PRO_0000391259" description="NAD(P)H-quinone oxidoreductase subunit 2 B, chloroplastic">
    <location>
        <begin position="1"/>
        <end position="510"/>
    </location>
</feature>
<feature type="transmembrane region" description="Helical" evidence="1">
    <location>
        <begin position="24"/>
        <end position="44"/>
    </location>
</feature>
<feature type="transmembrane region" description="Helical" evidence="1">
    <location>
        <begin position="57"/>
        <end position="77"/>
    </location>
</feature>
<feature type="transmembrane region" description="Helical" evidence="1">
    <location>
        <begin position="99"/>
        <end position="119"/>
    </location>
</feature>
<feature type="transmembrane region" description="Helical" evidence="1">
    <location>
        <begin position="124"/>
        <end position="144"/>
    </location>
</feature>
<feature type="transmembrane region" description="Helical" evidence="1">
    <location>
        <begin position="150"/>
        <end position="170"/>
    </location>
</feature>
<feature type="transmembrane region" description="Helical" evidence="1">
    <location>
        <begin position="183"/>
        <end position="203"/>
    </location>
</feature>
<feature type="transmembrane region" description="Helical" evidence="1">
    <location>
        <begin position="229"/>
        <end position="249"/>
    </location>
</feature>
<feature type="transmembrane region" description="Helical" evidence="1">
    <location>
        <begin position="295"/>
        <end position="315"/>
    </location>
</feature>
<feature type="transmembrane region" description="Helical" evidence="1">
    <location>
        <begin position="323"/>
        <end position="343"/>
    </location>
</feature>
<feature type="transmembrane region" description="Helical" evidence="1">
    <location>
        <begin position="347"/>
        <end position="367"/>
    </location>
</feature>
<feature type="transmembrane region" description="Helical" evidence="1">
    <location>
        <begin position="395"/>
        <end position="415"/>
    </location>
</feature>
<feature type="transmembrane region" description="Helical" evidence="1">
    <location>
        <begin position="418"/>
        <end position="438"/>
    </location>
</feature>
<feature type="transmembrane region" description="Helical" evidence="1">
    <location>
        <begin position="484"/>
        <end position="504"/>
    </location>
</feature>
<dbReference type="EC" id="7.1.1.-" evidence="1"/>
<dbReference type="EMBL" id="EF614270">
    <property type="protein sequence ID" value="ABQ81511.1"/>
    <property type="molecule type" value="Genomic_DNA"/>
</dbReference>
<dbReference type="SMR" id="P0CC43"/>
<dbReference type="GO" id="GO:0009535">
    <property type="term" value="C:chloroplast thylakoid membrane"/>
    <property type="evidence" value="ECO:0007669"/>
    <property type="project" value="UniProtKB-SubCell"/>
</dbReference>
<dbReference type="GO" id="GO:0008137">
    <property type="term" value="F:NADH dehydrogenase (ubiquinone) activity"/>
    <property type="evidence" value="ECO:0007669"/>
    <property type="project" value="InterPro"/>
</dbReference>
<dbReference type="GO" id="GO:0048038">
    <property type="term" value="F:quinone binding"/>
    <property type="evidence" value="ECO:0007669"/>
    <property type="project" value="UniProtKB-KW"/>
</dbReference>
<dbReference type="GO" id="GO:0042773">
    <property type="term" value="P:ATP synthesis coupled electron transport"/>
    <property type="evidence" value="ECO:0007669"/>
    <property type="project" value="InterPro"/>
</dbReference>
<dbReference type="GO" id="GO:0019684">
    <property type="term" value="P:photosynthesis, light reaction"/>
    <property type="evidence" value="ECO:0007669"/>
    <property type="project" value="UniProtKB-UniRule"/>
</dbReference>
<dbReference type="HAMAP" id="MF_00445">
    <property type="entry name" value="NDH1_NuoN_1"/>
    <property type="match status" value="1"/>
</dbReference>
<dbReference type="InterPro" id="IPR010096">
    <property type="entry name" value="NADH-Q_OxRdtase_suN/2"/>
</dbReference>
<dbReference type="InterPro" id="IPR001750">
    <property type="entry name" value="ND/Mrp_TM"/>
</dbReference>
<dbReference type="InterPro" id="IPR045693">
    <property type="entry name" value="Ndh2_N"/>
</dbReference>
<dbReference type="NCBIfam" id="TIGR01770">
    <property type="entry name" value="NDH_I_N"/>
    <property type="match status" value="1"/>
</dbReference>
<dbReference type="NCBIfam" id="NF002701">
    <property type="entry name" value="PRK02504.1"/>
    <property type="match status" value="1"/>
</dbReference>
<dbReference type="PANTHER" id="PTHR22773">
    <property type="entry name" value="NADH DEHYDROGENASE"/>
    <property type="match status" value="1"/>
</dbReference>
<dbReference type="Pfam" id="PF19530">
    <property type="entry name" value="Ndh2_N"/>
    <property type="match status" value="1"/>
</dbReference>
<dbReference type="Pfam" id="PF00361">
    <property type="entry name" value="Proton_antipo_M"/>
    <property type="match status" value="1"/>
</dbReference>
<dbReference type="PRINTS" id="PR01434">
    <property type="entry name" value="NADHDHGNASE5"/>
</dbReference>
<name>NU2C2_CERDE</name>
<evidence type="ECO:0000255" key="1">
    <source>
        <dbReference type="HAMAP-Rule" id="MF_00445"/>
    </source>
</evidence>
<proteinExistence type="inferred from homology"/>
<protein>
    <recommendedName>
        <fullName evidence="1">NAD(P)H-quinone oxidoreductase subunit 2 B, chloroplastic</fullName>
        <ecNumber evidence="1">7.1.1.-</ecNumber>
    </recommendedName>
    <alternativeName>
        <fullName evidence="1">NAD(P)H dehydrogenase, subunit 2 B</fullName>
    </alternativeName>
    <alternativeName>
        <fullName evidence="1">NADH-plastoquinone oxidoreductase subunit 2 B</fullName>
    </alternativeName>
</protein>
<keyword id="KW-0150">Chloroplast</keyword>
<keyword id="KW-0472">Membrane</keyword>
<keyword id="KW-0520">NAD</keyword>
<keyword id="KW-0521">NADP</keyword>
<keyword id="KW-0934">Plastid</keyword>
<keyword id="KW-0618">Plastoquinone</keyword>
<keyword id="KW-0874">Quinone</keyword>
<keyword id="KW-0793">Thylakoid</keyword>
<keyword id="KW-1278">Translocase</keyword>
<keyword id="KW-0812">Transmembrane</keyword>
<keyword id="KW-1133">Transmembrane helix</keyword>
<keyword id="KW-0813">Transport</keyword>
<gene>
    <name evidence="1" type="primary">ndhB2</name>
</gene>
<sequence length="510" mass="56619">MIWHVQNENFILDSTRIFMKAFHLLLFHGSFILPECILIFGLILLLMIDSTSDQKDIPWLYFISSTSLVMSITALLFRWKEEPMISFSGNFQTNNFNEIFQFLILLCSTLCIPLSVEYIECTEMAITEFLLFVLTATLGGMFLCGANDSITIFVAPECFSLCSYLLSGYTKRDVRSNEATTKYLLMGGASSSILVHGFSWLYGSSGGEIELQEIVNGLINTQMYNSPGISIALIFITVGIGFKLSPAPFHQWTPDVYEGSPTPVVAFLSVTSKVAASASATRIFDIPFYFSSNEWHLLLEILAILSMILGNLVAITQTSMKRMLAYSSIGQIGYVIIGIIVGDSNDGYASMITYMLFYISMNLGTFARIVSFGLRTGTDNIRDYAGLYTKDPFLALSSALCLLSLGGLPPLAGFFGKLHLFWCGWQAGLYFLVSIGLLTSVVSIYYYLKIIKLLMTGRNQEITPHVRNYRRSPLRSNNSIELSMIVCVIASTIPGISMNPIIAIAQDTLF</sequence>